<name>HEM3_LARHH</name>
<sequence>MKQVVIASRESPLAMWQAEHIRARLQALYPGLEVSILGITTQGDRILDKTLNKIGGKGLFVKELELAMQEGQADLAVHSIKDVPMDLPEGFALAAICEREDPRDAFVSSRYASLSELPAGAVVGTASLRRESQIRARYPHLLVKPLRGNLQTRLRKLDEGQYDAIILAASGLKRMGLAERIRMELSTADSLPAVGQGALGIEIRADRTDLMALLAPLNHPATYACVTAERAMGRALGASCQIPVGGYAEQHEHMLVMRGFVATPDGTTLLHAEATAPAEYADALGRTIAKKLLDQGADDVIDAVKAAG</sequence>
<protein>
    <recommendedName>
        <fullName evidence="1">Porphobilinogen deaminase</fullName>
        <shortName evidence="1">PBG</shortName>
        <ecNumber evidence="1">2.5.1.61</ecNumber>
    </recommendedName>
    <alternativeName>
        <fullName evidence="1">Hydroxymethylbilane synthase</fullName>
        <shortName evidence="1">HMBS</shortName>
    </alternativeName>
    <alternativeName>
        <fullName evidence="1">Pre-uroporphyrinogen synthase</fullName>
    </alternativeName>
</protein>
<feature type="chain" id="PRO_1000125674" description="Porphobilinogen deaminase">
    <location>
        <begin position="1"/>
        <end position="308"/>
    </location>
</feature>
<feature type="modified residue" description="S-(dipyrrolylmethanemethyl)cysteine" evidence="1">
    <location>
        <position position="240"/>
    </location>
</feature>
<accession>C1D679</accession>
<evidence type="ECO:0000255" key="1">
    <source>
        <dbReference type="HAMAP-Rule" id="MF_00260"/>
    </source>
</evidence>
<organism>
    <name type="scientific">Laribacter hongkongensis (strain HLHK9)</name>
    <dbReference type="NCBI Taxonomy" id="557598"/>
    <lineage>
        <taxon>Bacteria</taxon>
        <taxon>Pseudomonadati</taxon>
        <taxon>Pseudomonadota</taxon>
        <taxon>Betaproteobacteria</taxon>
        <taxon>Neisseriales</taxon>
        <taxon>Aquaspirillaceae</taxon>
        <taxon>Laribacter</taxon>
    </lineage>
</organism>
<reference key="1">
    <citation type="journal article" date="2009" name="PLoS Genet.">
        <title>The complete genome and proteome of Laribacter hongkongensis reveal potential mechanisms for adaptations to different temperatures and habitats.</title>
        <authorList>
            <person name="Woo P.C.Y."/>
            <person name="Lau S.K.P."/>
            <person name="Tse H."/>
            <person name="Teng J.L.L."/>
            <person name="Curreem S.O."/>
            <person name="Tsang A.K.L."/>
            <person name="Fan R.Y.Y."/>
            <person name="Wong G.K.M."/>
            <person name="Huang Y."/>
            <person name="Loman N.J."/>
            <person name="Snyder L.A.S."/>
            <person name="Cai J.J."/>
            <person name="Huang J.-D."/>
            <person name="Mak W."/>
            <person name="Pallen M.J."/>
            <person name="Lok S."/>
            <person name="Yuen K.-Y."/>
        </authorList>
    </citation>
    <scope>NUCLEOTIDE SEQUENCE [LARGE SCALE GENOMIC DNA]</scope>
    <source>
        <strain>HLHK9</strain>
    </source>
</reference>
<keyword id="KW-0627">Porphyrin biosynthesis</keyword>
<keyword id="KW-1185">Reference proteome</keyword>
<keyword id="KW-0808">Transferase</keyword>
<proteinExistence type="inferred from homology"/>
<gene>
    <name evidence="1" type="primary">hemC</name>
    <name type="ordered locus">LHK_03136</name>
</gene>
<comment type="function">
    <text evidence="1">Tetrapolymerization of the monopyrrole PBG into the hydroxymethylbilane pre-uroporphyrinogen in several discrete steps.</text>
</comment>
<comment type="catalytic activity">
    <reaction evidence="1">
        <text>4 porphobilinogen + H2O = hydroxymethylbilane + 4 NH4(+)</text>
        <dbReference type="Rhea" id="RHEA:13185"/>
        <dbReference type="ChEBI" id="CHEBI:15377"/>
        <dbReference type="ChEBI" id="CHEBI:28938"/>
        <dbReference type="ChEBI" id="CHEBI:57845"/>
        <dbReference type="ChEBI" id="CHEBI:58126"/>
        <dbReference type="EC" id="2.5.1.61"/>
    </reaction>
</comment>
<comment type="cofactor">
    <cofactor evidence="1">
        <name>dipyrromethane</name>
        <dbReference type="ChEBI" id="CHEBI:60342"/>
    </cofactor>
    <text evidence="1">Binds 1 dipyrromethane group covalently.</text>
</comment>
<comment type="pathway">
    <text evidence="1">Porphyrin-containing compound metabolism; protoporphyrin-IX biosynthesis; coproporphyrinogen-III from 5-aminolevulinate: step 2/4.</text>
</comment>
<comment type="subunit">
    <text evidence="1">Monomer.</text>
</comment>
<comment type="miscellaneous">
    <text evidence="1">The porphobilinogen subunits are added to the dipyrromethane group.</text>
</comment>
<comment type="similarity">
    <text evidence="1">Belongs to the HMBS family.</text>
</comment>
<dbReference type="EC" id="2.5.1.61" evidence="1"/>
<dbReference type="EMBL" id="CP001154">
    <property type="protein sequence ID" value="ACO76114.1"/>
    <property type="molecule type" value="Genomic_DNA"/>
</dbReference>
<dbReference type="RefSeq" id="WP_012698577.1">
    <property type="nucleotide sequence ID" value="NC_012559.1"/>
</dbReference>
<dbReference type="SMR" id="C1D679"/>
<dbReference type="STRING" id="557598.LHK_03136"/>
<dbReference type="KEGG" id="lhk:LHK_03136"/>
<dbReference type="eggNOG" id="COG0181">
    <property type="taxonomic scope" value="Bacteria"/>
</dbReference>
<dbReference type="HOGENOM" id="CLU_019704_1_0_4"/>
<dbReference type="UniPathway" id="UPA00251">
    <property type="reaction ID" value="UER00319"/>
</dbReference>
<dbReference type="Proteomes" id="UP000002010">
    <property type="component" value="Chromosome"/>
</dbReference>
<dbReference type="GO" id="GO:0005737">
    <property type="term" value="C:cytoplasm"/>
    <property type="evidence" value="ECO:0007669"/>
    <property type="project" value="TreeGrafter"/>
</dbReference>
<dbReference type="GO" id="GO:0004418">
    <property type="term" value="F:hydroxymethylbilane synthase activity"/>
    <property type="evidence" value="ECO:0007669"/>
    <property type="project" value="UniProtKB-UniRule"/>
</dbReference>
<dbReference type="GO" id="GO:0006782">
    <property type="term" value="P:protoporphyrinogen IX biosynthetic process"/>
    <property type="evidence" value="ECO:0007669"/>
    <property type="project" value="UniProtKB-UniRule"/>
</dbReference>
<dbReference type="CDD" id="cd13646">
    <property type="entry name" value="PBP2_EcHMBS_like"/>
    <property type="match status" value="1"/>
</dbReference>
<dbReference type="FunFam" id="3.40.190.10:FF:000004">
    <property type="entry name" value="Porphobilinogen deaminase"/>
    <property type="match status" value="1"/>
</dbReference>
<dbReference type="FunFam" id="3.40.190.10:FF:000005">
    <property type="entry name" value="Porphobilinogen deaminase"/>
    <property type="match status" value="1"/>
</dbReference>
<dbReference type="Gene3D" id="3.40.190.10">
    <property type="entry name" value="Periplasmic binding protein-like II"/>
    <property type="match status" value="2"/>
</dbReference>
<dbReference type="Gene3D" id="3.30.160.40">
    <property type="entry name" value="Porphobilinogen deaminase, C-terminal domain"/>
    <property type="match status" value="1"/>
</dbReference>
<dbReference type="HAMAP" id="MF_00260">
    <property type="entry name" value="Porphobil_deam"/>
    <property type="match status" value="1"/>
</dbReference>
<dbReference type="InterPro" id="IPR000860">
    <property type="entry name" value="HemC"/>
</dbReference>
<dbReference type="InterPro" id="IPR022419">
    <property type="entry name" value="Porphobilin_deaminase_cofac_BS"/>
</dbReference>
<dbReference type="InterPro" id="IPR022417">
    <property type="entry name" value="Porphobilin_deaminase_N"/>
</dbReference>
<dbReference type="InterPro" id="IPR022418">
    <property type="entry name" value="Porphobilinogen_deaminase_C"/>
</dbReference>
<dbReference type="InterPro" id="IPR036803">
    <property type="entry name" value="Porphobilinogen_deaminase_C_sf"/>
</dbReference>
<dbReference type="NCBIfam" id="TIGR00212">
    <property type="entry name" value="hemC"/>
    <property type="match status" value="1"/>
</dbReference>
<dbReference type="PANTHER" id="PTHR11557">
    <property type="entry name" value="PORPHOBILINOGEN DEAMINASE"/>
    <property type="match status" value="1"/>
</dbReference>
<dbReference type="PANTHER" id="PTHR11557:SF0">
    <property type="entry name" value="PORPHOBILINOGEN DEAMINASE"/>
    <property type="match status" value="1"/>
</dbReference>
<dbReference type="Pfam" id="PF01379">
    <property type="entry name" value="Porphobil_deam"/>
    <property type="match status" value="1"/>
</dbReference>
<dbReference type="Pfam" id="PF03900">
    <property type="entry name" value="Porphobil_deamC"/>
    <property type="match status" value="1"/>
</dbReference>
<dbReference type="PIRSF" id="PIRSF001438">
    <property type="entry name" value="4pyrrol_synth_OHMeBilane_synth"/>
    <property type="match status" value="1"/>
</dbReference>
<dbReference type="PRINTS" id="PR00151">
    <property type="entry name" value="PORPHBDMNASE"/>
</dbReference>
<dbReference type="SUPFAM" id="SSF53850">
    <property type="entry name" value="Periplasmic binding protein-like II"/>
    <property type="match status" value="1"/>
</dbReference>
<dbReference type="SUPFAM" id="SSF54782">
    <property type="entry name" value="Porphobilinogen deaminase (hydroxymethylbilane synthase), C-terminal domain"/>
    <property type="match status" value="1"/>
</dbReference>
<dbReference type="PROSITE" id="PS00533">
    <property type="entry name" value="PORPHOBILINOGEN_DEAM"/>
    <property type="match status" value="1"/>
</dbReference>